<accession>Q9S763</accession>
<accession>Q8LET6</accession>
<accession>Q96308</accession>
<keyword id="KW-0238">DNA-binding</keyword>
<keyword id="KW-0479">Metal-binding</keyword>
<keyword id="KW-0539">Nucleus</keyword>
<keyword id="KW-1185">Reference proteome</keyword>
<keyword id="KW-0804">Transcription</keyword>
<keyword id="KW-0805">Transcription regulation</keyword>
<keyword id="KW-0862">Zinc</keyword>
<feature type="chain" id="PRO_0000133686" description="Probable WRKY transcription factor 45">
    <location>
        <begin position="1"/>
        <end position="147"/>
    </location>
</feature>
<feature type="DNA-binding region" description="WRKY" evidence="2">
    <location>
        <begin position="59"/>
        <end position="124"/>
    </location>
</feature>
<feature type="region of interest" description="Disordered" evidence="3">
    <location>
        <begin position="21"/>
        <end position="52"/>
    </location>
</feature>
<feature type="binding site" evidence="1">
    <location>
        <position position="90"/>
    </location>
    <ligand>
        <name>Zn(2+)</name>
        <dbReference type="ChEBI" id="CHEBI:29105"/>
    </ligand>
</feature>
<feature type="binding site" evidence="1">
    <location>
        <position position="95"/>
    </location>
    <ligand>
        <name>Zn(2+)</name>
        <dbReference type="ChEBI" id="CHEBI:29105"/>
    </ligand>
</feature>
<feature type="binding site" evidence="1">
    <location>
        <position position="119"/>
    </location>
    <ligand>
        <name>Zn(2+)</name>
        <dbReference type="ChEBI" id="CHEBI:29105"/>
    </ligand>
</feature>
<feature type="binding site" evidence="1">
    <location>
        <position position="121"/>
    </location>
    <ligand>
        <name>Zn(2+)</name>
        <dbReference type="ChEBI" id="CHEBI:29105"/>
    </ligand>
</feature>
<feature type="sequence conflict" description="In Ref. 5; AAM62478." evidence="4" ref="5">
    <original>A</original>
    <variation>S</variation>
    <location>
        <position position="30"/>
    </location>
</feature>
<sequence>MEDRRCDVLFPCSSSVDPRLTEFHGVDNSAQPTTSSEEKPRSKKKKKEREARYAFQTRSQVDILDDGYRWRKYGQKAVKNNPFPRSYYKCTEEGCRVKKQVQRQWGDEGVVVTTYQGVHTHAVDKPSDNFHHILTQMHIFPPFCLKE</sequence>
<reference key="1">
    <citation type="submission" date="2001-10" db="EMBL/GenBank/DDBJ databases">
        <authorList>
            <person name="Kushnir S."/>
            <person name="Ulker B."/>
            <person name="Somssich I.E."/>
        </authorList>
    </citation>
    <scope>NUCLEOTIDE SEQUENCE [MRNA]</scope>
    <source>
        <strain>cv. Columbia</strain>
        <tissue>Flower</tissue>
    </source>
</reference>
<reference key="2">
    <citation type="journal article" date="2000" name="Nature">
        <title>Sequence and analysis of chromosome 3 of the plant Arabidopsis thaliana.</title>
        <authorList>
            <person name="Salanoubat M."/>
            <person name="Lemcke K."/>
            <person name="Rieger M."/>
            <person name="Ansorge W."/>
            <person name="Unseld M."/>
            <person name="Fartmann B."/>
            <person name="Valle G."/>
            <person name="Bloecker H."/>
            <person name="Perez-Alonso M."/>
            <person name="Obermaier B."/>
            <person name="Delseny M."/>
            <person name="Boutry M."/>
            <person name="Grivell L.A."/>
            <person name="Mache R."/>
            <person name="Puigdomenech P."/>
            <person name="De Simone V."/>
            <person name="Choisne N."/>
            <person name="Artiguenave F."/>
            <person name="Robert C."/>
            <person name="Brottier P."/>
            <person name="Wincker P."/>
            <person name="Cattolico L."/>
            <person name="Weissenbach J."/>
            <person name="Saurin W."/>
            <person name="Quetier F."/>
            <person name="Schaefer M."/>
            <person name="Mueller-Auer S."/>
            <person name="Gabel C."/>
            <person name="Fuchs M."/>
            <person name="Benes V."/>
            <person name="Wurmbach E."/>
            <person name="Drzonek H."/>
            <person name="Erfle H."/>
            <person name="Jordan N."/>
            <person name="Bangert S."/>
            <person name="Wiedelmann R."/>
            <person name="Kranz H."/>
            <person name="Voss H."/>
            <person name="Holland R."/>
            <person name="Brandt P."/>
            <person name="Nyakatura G."/>
            <person name="Vezzi A."/>
            <person name="D'Angelo M."/>
            <person name="Pallavicini A."/>
            <person name="Toppo S."/>
            <person name="Simionati B."/>
            <person name="Conrad A."/>
            <person name="Hornischer K."/>
            <person name="Kauer G."/>
            <person name="Loehnert T.-H."/>
            <person name="Nordsiek G."/>
            <person name="Reichelt J."/>
            <person name="Scharfe M."/>
            <person name="Schoen O."/>
            <person name="Bargues M."/>
            <person name="Terol J."/>
            <person name="Climent J."/>
            <person name="Navarro P."/>
            <person name="Collado C."/>
            <person name="Perez-Perez A."/>
            <person name="Ottenwaelder B."/>
            <person name="Duchemin D."/>
            <person name="Cooke R."/>
            <person name="Laudie M."/>
            <person name="Berger-Llauro C."/>
            <person name="Purnelle B."/>
            <person name="Masuy D."/>
            <person name="de Haan M."/>
            <person name="Maarse A.C."/>
            <person name="Alcaraz J.-P."/>
            <person name="Cottet A."/>
            <person name="Casacuberta E."/>
            <person name="Monfort A."/>
            <person name="Argiriou A."/>
            <person name="Flores M."/>
            <person name="Liguori R."/>
            <person name="Vitale D."/>
            <person name="Mannhaupt G."/>
            <person name="Haase D."/>
            <person name="Schoof H."/>
            <person name="Rudd S."/>
            <person name="Zaccaria P."/>
            <person name="Mewes H.-W."/>
            <person name="Mayer K.F.X."/>
            <person name="Kaul S."/>
            <person name="Town C.D."/>
            <person name="Koo H.L."/>
            <person name="Tallon L.J."/>
            <person name="Jenkins J."/>
            <person name="Rooney T."/>
            <person name="Rizzo M."/>
            <person name="Walts A."/>
            <person name="Utterback T."/>
            <person name="Fujii C.Y."/>
            <person name="Shea T.P."/>
            <person name="Creasy T.H."/>
            <person name="Haas B."/>
            <person name="Maiti R."/>
            <person name="Wu D."/>
            <person name="Peterson J."/>
            <person name="Van Aken S."/>
            <person name="Pai G."/>
            <person name="Militscher J."/>
            <person name="Sellers P."/>
            <person name="Gill J.E."/>
            <person name="Feldblyum T.V."/>
            <person name="Preuss D."/>
            <person name="Lin X."/>
            <person name="Nierman W.C."/>
            <person name="Salzberg S.L."/>
            <person name="White O."/>
            <person name="Venter J.C."/>
            <person name="Fraser C.M."/>
            <person name="Kaneko T."/>
            <person name="Nakamura Y."/>
            <person name="Sato S."/>
            <person name="Kato T."/>
            <person name="Asamizu E."/>
            <person name="Sasamoto S."/>
            <person name="Kimura T."/>
            <person name="Idesawa K."/>
            <person name="Kawashima K."/>
            <person name="Kishida Y."/>
            <person name="Kiyokawa C."/>
            <person name="Kohara M."/>
            <person name="Matsumoto M."/>
            <person name="Matsuno A."/>
            <person name="Muraki A."/>
            <person name="Nakayama S."/>
            <person name="Nakazaki N."/>
            <person name="Shinpo S."/>
            <person name="Takeuchi C."/>
            <person name="Wada T."/>
            <person name="Watanabe A."/>
            <person name="Yamada M."/>
            <person name="Yasuda M."/>
            <person name="Tabata S."/>
        </authorList>
    </citation>
    <scope>NUCLEOTIDE SEQUENCE [LARGE SCALE GENOMIC DNA]</scope>
    <source>
        <strain>cv. Columbia</strain>
    </source>
</reference>
<reference key="3">
    <citation type="journal article" date="2017" name="Plant J.">
        <title>Araport11: a complete reannotation of the Arabidopsis thaliana reference genome.</title>
        <authorList>
            <person name="Cheng C.Y."/>
            <person name="Krishnakumar V."/>
            <person name="Chan A.P."/>
            <person name="Thibaud-Nissen F."/>
            <person name="Schobel S."/>
            <person name="Town C.D."/>
        </authorList>
    </citation>
    <scope>GENOME REANNOTATION</scope>
    <source>
        <strain>cv. Columbia</strain>
    </source>
</reference>
<reference key="4">
    <citation type="journal article" date="2002" name="Science">
        <title>Functional annotation of a full-length Arabidopsis cDNA collection.</title>
        <authorList>
            <person name="Seki M."/>
            <person name="Narusaka M."/>
            <person name="Kamiya A."/>
            <person name="Ishida J."/>
            <person name="Satou M."/>
            <person name="Sakurai T."/>
            <person name="Nakajima M."/>
            <person name="Enju A."/>
            <person name="Akiyama K."/>
            <person name="Oono Y."/>
            <person name="Muramatsu M."/>
            <person name="Hayashizaki Y."/>
            <person name="Kawai J."/>
            <person name="Carninci P."/>
            <person name="Itoh M."/>
            <person name="Ishii Y."/>
            <person name="Arakawa T."/>
            <person name="Shibata K."/>
            <person name="Shinagawa A."/>
            <person name="Shinozaki K."/>
        </authorList>
    </citation>
    <scope>NUCLEOTIDE SEQUENCE [LARGE SCALE MRNA]</scope>
    <source>
        <strain>cv. Columbia</strain>
    </source>
</reference>
<reference key="5">
    <citation type="submission" date="2002-03" db="EMBL/GenBank/DDBJ databases">
        <title>Full-length cDNA from Arabidopsis thaliana.</title>
        <authorList>
            <person name="Brover V.V."/>
            <person name="Troukhan M.E."/>
            <person name="Alexandrov N.A."/>
            <person name="Lu Y.-P."/>
            <person name="Flavell R.B."/>
            <person name="Feldmann K.A."/>
        </authorList>
    </citation>
    <scope>NUCLEOTIDE SEQUENCE [LARGE SCALE MRNA]</scope>
</reference>
<reference key="6">
    <citation type="journal article" date="1989" name="Mol. Gen. Genet.">
        <title>The gene family encoding the Arabidopsis thaliana translation elongation factor EF-1 alpha: molecular cloning, characterization and expression.</title>
        <authorList>
            <person name="Axelos M."/>
            <person name="Bardet C."/>
            <person name="Liboz T."/>
            <person name="Le van Thai A."/>
            <person name="Curie C."/>
            <person name="Lescure B."/>
        </authorList>
    </citation>
    <scope>NUCLEOTIDE SEQUENCE OF 68-121</scope>
    <source>
        <strain>cv. Columbia</strain>
    </source>
</reference>
<evidence type="ECO:0000250" key="1">
    <source>
        <dbReference type="UniProtKB" id="Q9SI37"/>
    </source>
</evidence>
<evidence type="ECO:0000255" key="2">
    <source>
        <dbReference type="PROSITE-ProRule" id="PRU00223"/>
    </source>
</evidence>
<evidence type="ECO:0000256" key="3">
    <source>
        <dbReference type="SAM" id="MobiDB-lite"/>
    </source>
</evidence>
<evidence type="ECO:0000305" key="4"/>
<protein>
    <recommendedName>
        <fullName>Probable WRKY transcription factor 45</fullName>
    </recommendedName>
    <alternativeName>
        <fullName>AT.I.24-4</fullName>
    </alternativeName>
    <alternativeName>
        <fullName>WRKY DNA-binding protein 45</fullName>
    </alternativeName>
</protein>
<comment type="function">
    <text evidence="1">Transcription factor. Interacts specifically with the W box (5'-(T)TGAC[CT]-3'), a frequently occurring elicitor-responsive cis-acting element.</text>
</comment>
<comment type="interaction">
    <interactant intactId="EBI-15195723">
        <id>Q9S763</id>
    </interactant>
    <interactant intactId="EBI-25517681">
        <id>A0A178VL61</id>
        <label>AXX17_At2g18500</label>
    </interactant>
    <organismsDiffer>false</organismsDiffer>
    <experiments>3</experiments>
</comment>
<comment type="interaction">
    <interactant intactId="EBI-15195723">
        <id>Q9S763</id>
    </interactant>
    <interactant intactId="EBI-1998580">
        <id>Q8VZI9</id>
        <label>ENAP1</label>
    </interactant>
    <organismsDiffer>false</organismsDiffer>
    <experiments>4</experiments>
</comment>
<comment type="interaction">
    <interactant intactId="EBI-15195723">
        <id>Q9S763</id>
    </interactant>
    <interactant intactId="EBI-4426127">
        <id>Q8GXL7</id>
        <label>GATA24</label>
    </interactant>
    <organismsDiffer>false</organismsDiffer>
    <experiments>6</experiments>
</comment>
<comment type="interaction">
    <interactant intactId="EBI-15195723">
        <id>Q9S763</id>
    </interactant>
    <interactant intactId="EBI-15192297">
        <id>Q9LQF0</id>
        <label>TCP23</label>
    </interactant>
    <organismsDiffer>false</organismsDiffer>
    <experiments>6</experiments>
</comment>
<comment type="interaction">
    <interactant intactId="EBI-15195723">
        <id>Q9S763</id>
    </interactant>
    <interactant intactId="EBI-15192325">
        <id>Q8LPR5</id>
        <label>TCP4</label>
    </interactant>
    <organismsDiffer>false</organismsDiffer>
    <experiments>3</experiments>
</comment>
<comment type="subcellular location">
    <subcellularLocation>
        <location evidence="1">Nucleus</location>
    </subcellularLocation>
</comment>
<comment type="similarity">
    <text evidence="4">Belongs to the WRKY group I family.</text>
</comment>
<organism>
    <name type="scientific">Arabidopsis thaliana</name>
    <name type="common">Mouse-ear cress</name>
    <dbReference type="NCBI Taxonomy" id="3702"/>
    <lineage>
        <taxon>Eukaryota</taxon>
        <taxon>Viridiplantae</taxon>
        <taxon>Streptophyta</taxon>
        <taxon>Embryophyta</taxon>
        <taxon>Tracheophyta</taxon>
        <taxon>Spermatophyta</taxon>
        <taxon>Magnoliopsida</taxon>
        <taxon>eudicotyledons</taxon>
        <taxon>Gunneridae</taxon>
        <taxon>Pentapetalae</taxon>
        <taxon>rosids</taxon>
        <taxon>malvids</taxon>
        <taxon>Brassicales</taxon>
        <taxon>Brassicaceae</taxon>
        <taxon>Camelineae</taxon>
        <taxon>Arabidopsis</taxon>
    </lineage>
</organism>
<gene>
    <name type="primary">WRKY45</name>
    <name type="ordered locus">At3g01970</name>
    <name type="ORF">F1C9.25</name>
    <name type="ORF">F28J7.30</name>
</gene>
<dbReference type="EMBL" id="AF426251">
    <property type="protein sequence ID" value="AAL29428.1"/>
    <property type="molecule type" value="mRNA"/>
</dbReference>
<dbReference type="EMBL" id="AC010797">
    <property type="protein sequence ID" value="AAF03448.1"/>
    <property type="molecule type" value="Genomic_DNA"/>
</dbReference>
<dbReference type="EMBL" id="AC011664">
    <property type="protein sequence ID" value="AAF14838.1"/>
    <property type="molecule type" value="Genomic_DNA"/>
</dbReference>
<dbReference type="EMBL" id="CP002686">
    <property type="protein sequence ID" value="AEE73742.1"/>
    <property type="molecule type" value="Genomic_DNA"/>
</dbReference>
<dbReference type="EMBL" id="AK118457">
    <property type="protein sequence ID" value="BAC43065.1"/>
    <property type="molecule type" value="mRNA"/>
</dbReference>
<dbReference type="EMBL" id="AY085246">
    <property type="protein sequence ID" value="AAM62478.1"/>
    <property type="molecule type" value="mRNA"/>
</dbReference>
<dbReference type="EMBL" id="U63815">
    <property type="protein sequence ID" value="AAB07876.1"/>
    <property type="molecule type" value="Genomic_DNA"/>
</dbReference>
<dbReference type="RefSeq" id="NP_186846.1">
    <property type="nucleotide sequence ID" value="NM_111063.4"/>
</dbReference>
<dbReference type="SMR" id="Q9S763"/>
<dbReference type="BioGRID" id="6603">
    <property type="interactions" value="29"/>
</dbReference>
<dbReference type="IntAct" id="Q9S763">
    <property type="interactions" value="24"/>
</dbReference>
<dbReference type="STRING" id="3702.Q9S763"/>
<dbReference type="iPTMnet" id="Q9S763"/>
<dbReference type="PaxDb" id="3702-AT3G01970.1"/>
<dbReference type="ProteomicsDB" id="246439"/>
<dbReference type="EnsemblPlants" id="AT3G01970.1">
    <property type="protein sequence ID" value="AT3G01970.1"/>
    <property type="gene ID" value="AT3G01970"/>
</dbReference>
<dbReference type="GeneID" id="821270"/>
<dbReference type="Gramene" id="AT3G01970.1">
    <property type="protein sequence ID" value="AT3G01970.1"/>
    <property type="gene ID" value="AT3G01970"/>
</dbReference>
<dbReference type="KEGG" id="ath:AT3G01970"/>
<dbReference type="Araport" id="AT3G01970"/>
<dbReference type="TAIR" id="AT3G01970">
    <property type="gene designation" value="WRKY45"/>
</dbReference>
<dbReference type="eggNOG" id="ENOG502RZAJ">
    <property type="taxonomic scope" value="Eukaryota"/>
</dbReference>
<dbReference type="HOGENOM" id="CLU_073202_4_0_1"/>
<dbReference type="InParanoid" id="Q9S763"/>
<dbReference type="OMA" id="MHTHPIH"/>
<dbReference type="OrthoDB" id="1915472at2759"/>
<dbReference type="PhylomeDB" id="Q9S763"/>
<dbReference type="PRO" id="PR:Q9S763"/>
<dbReference type="Proteomes" id="UP000006548">
    <property type="component" value="Chromosome 3"/>
</dbReference>
<dbReference type="ExpressionAtlas" id="Q9S763">
    <property type="expression patterns" value="baseline and differential"/>
</dbReference>
<dbReference type="GO" id="GO:0005634">
    <property type="term" value="C:nucleus"/>
    <property type="evidence" value="ECO:0000314"/>
    <property type="project" value="TAIR"/>
</dbReference>
<dbReference type="GO" id="GO:0003700">
    <property type="term" value="F:DNA-binding transcription factor activity"/>
    <property type="evidence" value="ECO:0000250"/>
    <property type="project" value="TAIR"/>
</dbReference>
<dbReference type="GO" id="GO:0046872">
    <property type="term" value="F:metal ion binding"/>
    <property type="evidence" value="ECO:0007669"/>
    <property type="project" value="UniProtKB-KW"/>
</dbReference>
<dbReference type="GO" id="GO:0000976">
    <property type="term" value="F:transcription cis-regulatory region binding"/>
    <property type="evidence" value="ECO:0000353"/>
    <property type="project" value="TAIR"/>
</dbReference>
<dbReference type="GO" id="GO:0006817">
    <property type="term" value="P:phosphate ion transport"/>
    <property type="evidence" value="ECO:0000315"/>
    <property type="project" value="TAIR"/>
</dbReference>
<dbReference type="FunFam" id="2.20.25.80:FF:000003">
    <property type="entry name" value="WRKY transcription factor 57"/>
    <property type="match status" value="1"/>
</dbReference>
<dbReference type="Gene3D" id="2.20.25.80">
    <property type="entry name" value="WRKY domain"/>
    <property type="match status" value="1"/>
</dbReference>
<dbReference type="InterPro" id="IPR003657">
    <property type="entry name" value="WRKY_dom"/>
</dbReference>
<dbReference type="InterPro" id="IPR036576">
    <property type="entry name" value="WRKY_dom_sf"/>
</dbReference>
<dbReference type="InterPro" id="IPR044810">
    <property type="entry name" value="WRKY_plant"/>
</dbReference>
<dbReference type="PANTHER" id="PTHR31221:SF160">
    <property type="entry name" value="WRKY TRANSCRIPTION FACTOR 45-RELATED"/>
    <property type="match status" value="1"/>
</dbReference>
<dbReference type="PANTHER" id="PTHR31221">
    <property type="entry name" value="WRKY TRANSCRIPTION FACTOR PROTEIN 1-RELATED"/>
    <property type="match status" value="1"/>
</dbReference>
<dbReference type="Pfam" id="PF03106">
    <property type="entry name" value="WRKY"/>
    <property type="match status" value="1"/>
</dbReference>
<dbReference type="SMART" id="SM00774">
    <property type="entry name" value="WRKY"/>
    <property type="match status" value="1"/>
</dbReference>
<dbReference type="SUPFAM" id="SSF118290">
    <property type="entry name" value="WRKY DNA-binding domain"/>
    <property type="match status" value="1"/>
</dbReference>
<dbReference type="PROSITE" id="PS50811">
    <property type="entry name" value="WRKY"/>
    <property type="match status" value="1"/>
</dbReference>
<proteinExistence type="evidence at protein level"/>
<name>WRK45_ARATH</name>